<gene>
    <name evidence="1" type="primary">tyrS</name>
    <name type="ordered locus">SAOUHSC_01839</name>
</gene>
<dbReference type="EC" id="6.1.1.1" evidence="1"/>
<dbReference type="EMBL" id="CP000253">
    <property type="protein sequence ID" value="ABD30907.1"/>
    <property type="molecule type" value="Genomic_DNA"/>
</dbReference>
<dbReference type="RefSeq" id="WP_000186029.1">
    <property type="nucleotide sequence ID" value="NZ_LS483365.1"/>
</dbReference>
<dbReference type="RefSeq" id="YP_500345.1">
    <property type="nucleotide sequence ID" value="NC_007795.1"/>
</dbReference>
<dbReference type="SMR" id="Q2FXJ5"/>
<dbReference type="STRING" id="93061.SAOUHSC_01839"/>
<dbReference type="BindingDB" id="Q2FXJ5"/>
<dbReference type="PaxDb" id="1280-SAXN108_1757"/>
<dbReference type="GeneID" id="3921789"/>
<dbReference type="KEGG" id="sao:SAOUHSC_01839"/>
<dbReference type="PATRIC" id="fig|93061.5.peg.1677"/>
<dbReference type="eggNOG" id="COG0162">
    <property type="taxonomic scope" value="Bacteria"/>
</dbReference>
<dbReference type="HOGENOM" id="CLU_024003_0_3_9"/>
<dbReference type="OrthoDB" id="9804243at2"/>
<dbReference type="PRO" id="PR:Q2FXJ5"/>
<dbReference type="Proteomes" id="UP000008816">
    <property type="component" value="Chromosome"/>
</dbReference>
<dbReference type="GO" id="GO:0005829">
    <property type="term" value="C:cytosol"/>
    <property type="evidence" value="ECO:0000318"/>
    <property type="project" value="GO_Central"/>
</dbReference>
<dbReference type="GO" id="GO:0005524">
    <property type="term" value="F:ATP binding"/>
    <property type="evidence" value="ECO:0007669"/>
    <property type="project" value="UniProtKB-UniRule"/>
</dbReference>
<dbReference type="GO" id="GO:0003723">
    <property type="term" value="F:RNA binding"/>
    <property type="evidence" value="ECO:0007669"/>
    <property type="project" value="UniProtKB-KW"/>
</dbReference>
<dbReference type="GO" id="GO:0004831">
    <property type="term" value="F:tyrosine-tRNA ligase activity"/>
    <property type="evidence" value="ECO:0000318"/>
    <property type="project" value="GO_Central"/>
</dbReference>
<dbReference type="GO" id="GO:0043039">
    <property type="term" value="P:tRNA aminoacylation"/>
    <property type="evidence" value="ECO:0000318"/>
    <property type="project" value="GO_Central"/>
</dbReference>
<dbReference type="GO" id="GO:0006437">
    <property type="term" value="P:tyrosyl-tRNA aminoacylation"/>
    <property type="evidence" value="ECO:0007669"/>
    <property type="project" value="UniProtKB-UniRule"/>
</dbReference>
<dbReference type="CDD" id="cd00165">
    <property type="entry name" value="S4"/>
    <property type="match status" value="1"/>
</dbReference>
<dbReference type="CDD" id="cd00395">
    <property type="entry name" value="Tyr_Trp_RS_core"/>
    <property type="match status" value="1"/>
</dbReference>
<dbReference type="FunFam" id="1.10.240.10:FF:000001">
    <property type="entry name" value="Tyrosine--tRNA ligase"/>
    <property type="match status" value="1"/>
</dbReference>
<dbReference type="FunFam" id="3.10.290.10:FF:000012">
    <property type="entry name" value="Tyrosine--tRNA ligase"/>
    <property type="match status" value="1"/>
</dbReference>
<dbReference type="FunFam" id="3.40.50.620:FF:000008">
    <property type="entry name" value="Tyrosine--tRNA ligase"/>
    <property type="match status" value="1"/>
</dbReference>
<dbReference type="Gene3D" id="3.40.50.620">
    <property type="entry name" value="HUPs"/>
    <property type="match status" value="1"/>
</dbReference>
<dbReference type="Gene3D" id="3.10.290.10">
    <property type="entry name" value="RNA-binding S4 domain"/>
    <property type="match status" value="1"/>
</dbReference>
<dbReference type="Gene3D" id="1.10.240.10">
    <property type="entry name" value="Tyrosyl-Transfer RNA Synthetase"/>
    <property type="match status" value="1"/>
</dbReference>
<dbReference type="HAMAP" id="MF_02006">
    <property type="entry name" value="Tyr_tRNA_synth_type1"/>
    <property type="match status" value="1"/>
</dbReference>
<dbReference type="InterPro" id="IPR001412">
    <property type="entry name" value="aa-tRNA-synth_I_CS"/>
</dbReference>
<dbReference type="InterPro" id="IPR002305">
    <property type="entry name" value="aa-tRNA-synth_Ic"/>
</dbReference>
<dbReference type="InterPro" id="IPR014729">
    <property type="entry name" value="Rossmann-like_a/b/a_fold"/>
</dbReference>
<dbReference type="InterPro" id="IPR002942">
    <property type="entry name" value="S4_RNA-bd"/>
</dbReference>
<dbReference type="InterPro" id="IPR036986">
    <property type="entry name" value="S4_RNA-bd_sf"/>
</dbReference>
<dbReference type="InterPro" id="IPR054608">
    <property type="entry name" value="SYY-like_C"/>
</dbReference>
<dbReference type="InterPro" id="IPR002307">
    <property type="entry name" value="Tyr-tRNA-ligase"/>
</dbReference>
<dbReference type="InterPro" id="IPR024088">
    <property type="entry name" value="Tyr-tRNA-ligase_bac-type"/>
</dbReference>
<dbReference type="InterPro" id="IPR024107">
    <property type="entry name" value="Tyr-tRNA-ligase_bac_1"/>
</dbReference>
<dbReference type="NCBIfam" id="TIGR00234">
    <property type="entry name" value="tyrS"/>
    <property type="match status" value="1"/>
</dbReference>
<dbReference type="PANTHER" id="PTHR11766:SF0">
    <property type="entry name" value="TYROSINE--TRNA LIGASE, MITOCHONDRIAL"/>
    <property type="match status" value="1"/>
</dbReference>
<dbReference type="PANTHER" id="PTHR11766">
    <property type="entry name" value="TYROSYL-TRNA SYNTHETASE"/>
    <property type="match status" value="1"/>
</dbReference>
<dbReference type="Pfam" id="PF22421">
    <property type="entry name" value="SYY_C-terminal"/>
    <property type="match status" value="1"/>
</dbReference>
<dbReference type="Pfam" id="PF00579">
    <property type="entry name" value="tRNA-synt_1b"/>
    <property type="match status" value="1"/>
</dbReference>
<dbReference type="PRINTS" id="PR01040">
    <property type="entry name" value="TRNASYNTHTYR"/>
</dbReference>
<dbReference type="SMART" id="SM00363">
    <property type="entry name" value="S4"/>
    <property type="match status" value="1"/>
</dbReference>
<dbReference type="SUPFAM" id="SSF55174">
    <property type="entry name" value="Alpha-L RNA-binding motif"/>
    <property type="match status" value="1"/>
</dbReference>
<dbReference type="SUPFAM" id="SSF52374">
    <property type="entry name" value="Nucleotidylyl transferase"/>
    <property type="match status" value="1"/>
</dbReference>
<dbReference type="PROSITE" id="PS00178">
    <property type="entry name" value="AA_TRNA_LIGASE_I"/>
    <property type="match status" value="1"/>
</dbReference>
<dbReference type="PROSITE" id="PS50889">
    <property type="entry name" value="S4"/>
    <property type="match status" value="1"/>
</dbReference>
<protein>
    <recommendedName>
        <fullName evidence="1">Tyrosine--tRNA ligase</fullName>
        <ecNumber evidence="1">6.1.1.1</ecNumber>
    </recommendedName>
    <alternativeName>
        <fullName evidence="1">Tyrosyl-tRNA synthetase</fullName>
        <shortName evidence="1">TyrRS</shortName>
    </alternativeName>
</protein>
<name>SYY_STAA8</name>
<feature type="chain" id="PRO_1000088628" description="Tyrosine--tRNA ligase">
    <location>
        <begin position="1"/>
        <end position="420"/>
    </location>
</feature>
<feature type="domain" description="S4 RNA-binding" evidence="1">
    <location>
        <begin position="353"/>
        <end position="420"/>
    </location>
</feature>
<feature type="short sequence motif" description="'HIGH' region">
    <location>
        <begin position="41"/>
        <end position="50"/>
    </location>
</feature>
<feature type="short sequence motif" description="'KMSKS' region">
    <location>
        <begin position="231"/>
        <end position="235"/>
    </location>
</feature>
<feature type="binding site" evidence="1">
    <location>
        <position position="36"/>
    </location>
    <ligand>
        <name>L-tyrosine</name>
        <dbReference type="ChEBI" id="CHEBI:58315"/>
    </ligand>
</feature>
<feature type="binding site" evidence="1">
    <location>
        <position position="170"/>
    </location>
    <ligand>
        <name>L-tyrosine</name>
        <dbReference type="ChEBI" id="CHEBI:58315"/>
    </ligand>
</feature>
<feature type="binding site" evidence="1">
    <location>
        <position position="174"/>
    </location>
    <ligand>
        <name>L-tyrosine</name>
        <dbReference type="ChEBI" id="CHEBI:58315"/>
    </ligand>
</feature>
<feature type="binding site" evidence="1">
    <location>
        <position position="234"/>
    </location>
    <ligand>
        <name>ATP</name>
        <dbReference type="ChEBI" id="CHEBI:30616"/>
    </ligand>
</feature>
<reference key="1">
    <citation type="book" date="2006" name="Gram positive pathogens, 2nd edition">
        <title>The Staphylococcus aureus NCTC 8325 genome.</title>
        <editorList>
            <person name="Fischetti V."/>
            <person name="Novick R."/>
            <person name="Ferretti J."/>
            <person name="Portnoy D."/>
            <person name="Rood J."/>
        </editorList>
        <authorList>
            <person name="Gillaspy A.F."/>
            <person name="Worrell V."/>
            <person name="Orvis J."/>
            <person name="Roe B.A."/>
            <person name="Dyer D.W."/>
            <person name="Iandolo J.J."/>
        </authorList>
    </citation>
    <scope>NUCLEOTIDE SEQUENCE [LARGE SCALE GENOMIC DNA]</scope>
    <source>
        <strain>NCTC 8325 / PS 47</strain>
    </source>
</reference>
<sequence length="420" mass="47598">MTNVLIEDLKWRGLIYQQTDEQGIEDLLNKEQVTLYCGADPTADSLHIGHLLPFLTLRRFQEHGHRPIVLIGGGTGMIGDPSGKSEERVLQTEEQVDKNIEGISKQMHNIFEFGTDHGAVLVNNRDWLGQISLISFLRDYGKHVGVNYMLGKDSIQSRLEHGISYTEFTYTILQAIDFGHLNRELNCKIQVGGSDQWGNITSGIELMRRMYGQTDAYGLTIPLVTKSDGKKFGKSESGAVWLDAEKTSPYEFYQFWINQSDEDVIKFLKYFTFLGKEEIDRLEQSKNEAPHLREAQKTLAEEVTKFIHGEDALNDAIRISQALFSGDLKSLSAKELKDGFKDVPQVTLSNDTTNIVEVLIETGISPSKRQAREDVNNGAIYINGERQQDVNYALAPEDKIDGEFTIIRRGKKKYFMVNYQ</sequence>
<keyword id="KW-0030">Aminoacyl-tRNA synthetase</keyword>
<keyword id="KW-0067">ATP-binding</keyword>
<keyword id="KW-0963">Cytoplasm</keyword>
<keyword id="KW-0436">Ligase</keyword>
<keyword id="KW-0547">Nucleotide-binding</keyword>
<keyword id="KW-0648">Protein biosynthesis</keyword>
<keyword id="KW-1185">Reference proteome</keyword>
<keyword id="KW-0694">RNA-binding</keyword>
<proteinExistence type="inferred from homology"/>
<evidence type="ECO:0000255" key="1">
    <source>
        <dbReference type="HAMAP-Rule" id="MF_02006"/>
    </source>
</evidence>
<organism>
    <name type="scientific">Staphylococcus aureus (strain NCTC 8325 / PS 47)</name>
    <dbReference type="NCBI Taxonomy" id="93061"/>
    <lineage>
        <taxon>Bacteria</taxon>
        <taxon>Bacillati</taxon>
        <taxon>Bacillota</taxon>
        <taxon>Bacilli</taxon>
        <taxon>Bacillales</taxon>
        <taxon>Staphylococcaceae</taxon>
        <taxon>Staphylococcus</taxon>
    </lineage>
</organism>
<comment type="function">
    <text evidence="1">Catalyzes the attachment of tyrosine to tRNA(Tyr) in a two-step reaction: tyrosine is first activated by ATP to form Tyr-AMP and then transferred to the acceptor end of tRNA(Tyr).</text>
</comment>
<comment type="catalytic activity">
    <reaction evidence="1">
        <text>tRNA(Tyr) + L-tyrosine + ATP = L-tyrosyl-tRNA(Tyr) + AMP + diphosphate + H(+)</text>
        <dbReference type="Rhea" id="RHEA:10220"/>
        <dbReference type="Rhea" id="RHEA-COMP:9706"/>
        <dbReference type="Rhea" id="RHEA-COMP:9707"/>
        <dbReference type="ChEBI" id="CHEBI:15378"/>
        <dbReference type="ChEBI" id="CHEBI:30616"/>
        <dbReference type="ChEBI" id="CHEBI:33019"/>
        <dbReference type="ChEBI" id="CHEBI:58315"/>
        <dbReference type="ChEBI" id="CHEBI:78442"/>
        <dbReference type="ChEBI" id="CHEBI:78536"/>
        <dbReference type="ChEBI" id="CHEBI:456215"/>
        <dbReference type="EC" id="6.1.1.1"/>
    </reaction>
</comment>
<comment type="subunit">
    <text evidence="1">Homodimer.</text>
</comment>
<comment type="subcellular location">
    <subcellularLocation>
        <location evidence="1">Cytoplasm</location>
    </subcellularLocation>
</comment>
<comment type="similarity">
    <text evidence="1">Belongs to the class-I aminoacyl-tRNA synthetase family. TyrS type 1 subfamily.</text>
</comment>
<accession>Q2FXJ5</accession>